<gene>
    <name evidence="1" type="primary">yggX</name>
    <name type="ordered locus">EcolC_0752</name>
</gene>
<sequence length="91" mass="10953">MSRTIFCTFLQREAEGQDFQLYPGELGKRIYNEISKEAWAQWQHKQTMLINEKKLNMMNAEHRKLLEQEMVNFLFEGKEVHIEGYTPEDKK</sequence>
<feature type="chain" id="PRO_1000083075" description="Probable Fe(2+)-trafficking protein">
    <location>
        <begin position="1"/>
        <end position="91"/>
    </location>
</feature>
<comment type="function">
    <text evidence="1">Could be a mediator in iron transactions between iron acquisition and iron-requiring processes, such as synthesis and/or repair of Fe-S clusters in biosynthetic enzymes.</text>
</comment>
<comment type="subunit">
    <text evidence="1">Monomer.</text>
</comment>
<comment type="similarity">
    <text evidence="1">Belongs to the Fe(2+)-trafficking protein family.</text>
</comment>
<name>FETP_ECOLC</name>
<evidence type="ECO:0000255" key="1">
    <source>
        <dbReference type="HAMAP-Rule" id="MF_00686"/>
    </source>
</evidence>
<reference key="1">
    <citation type="submission" date="2008-02" db="EMBL/GenBank/DDBJ databases">
        <title>Complete sequence of Escherichia coli C str. ATCC 8739.</title>
        <authorList>
            <person name="Copeland A."/>
            <person name="Lucas S."/>
            <person name="Lapidus A."/>
            <person name="Glavina del Rio T."/>
            <person name="Dalin E."/>
            <person name="Tice H."/>
            <person name="Bruce D."/>
            <person name="Goodwin L."/>
            <person name="Pitluck S."/>
            <person name="Kiss H."/>
            <person name="Brettin T."/>
            <person name="Detter J.C."/>
            <person name="Han C."/>
            <person name="Kuske C.R."/>
            <person name="Schmutz J."/>
            <person name="Larimer F."/>
            <person name="Land M."/>
            <person name="Hauser L."/>
            <person name="Kyrpides N."/>
            <person name="Mikhailova N."/>
            <person name="Ingram L."/>
            <person name="Richardson P."/>
        </authorList>
    </citation>
    <scope>NUCLEOTIDE SEQUENCE [LARGE SCALE GENOMIC DNA]</scope>
    <source>
        <strain>ATCC 8739 / DSM 1576 / NBRC 3972 / NCIMB 8545 / WDCM 00012 / Crooks</strain>
    </source>
</reference>
<protein>
    <recommendedName>
        <fullName evidence="1">Probable Fe(2+)-trafficking protein</fullName>
    </recommendedName>
</protein>
<dbReference type="EMBL" id="CP000946">
    <property type="protein sequence ID" value="ACA76424.1"/>
    <property type="molecule type" value="Genomic_DNA"/>
</dbReference>
<dbReference type="RefSeq" id="WP_000091700.1">
    <property type="nucleotide sequence ID" value="NZ_MTFT01000004.1"/>
</dbReference>
<dbReference type="BMRB" id="B1ISK7"/>
<dbReference type="SMR" id="B1ISK7"/>
<dbReference type="KEGG" id="ecl:EcolC_0752"/>
<dbReference type="HOGENOM" id="CLU_170994_0_0_6"/>
<dbReference type="GO" id="GO:0005829">
    <property type="term" value="C:cytosol"/>
    <property type="evidence" value="ECO:0007669"/>
    <property type="project" value="TreeGrafter"/>
</dbReference>
<dbReference type="GO" id="GO:0005506">
    <property type="term" value="F:iron ion binding"/>
    <property type="evidence" value="ECO:0007669"/>
    <property type="project" value="UniProtKB-UniRule"/>
</dbReference>
<dbReference type="GO" id="GO:0034599">
    <property type="term" value="P:cellular response to oxidative stress"/>
    <property type="evidence" value="ECO:0007669"/>
    <property type="project" value="TreeGrafter"/>
</dbReference>
<dbReference type="FunFam" id="1.10.3880.10:FF:000001">
    <property type="entry name" value="Probable Fe(2+)-trafficking protein"/>
    <property type="match status" value="1"/>
</dbReference>
<dbReference type="Gene3D" id="1.10.3880.10">
    <property type="entry name" value="Fe(II) trafficking protein YggX"/>
    <property type="match status" value="1"/>
</dbReference>
<dbReference type="HAMAP" id="MF_00686">
    <property type="entry name" value="Fe_traffic_YggX"/>
    <property type="match status" value="1"/>
</dbReference>
<dbReference type="InterPro" id="IPR007457">
    <property type="entry name" value="Fe_traffick_prot_YggX"/>
</dbReference>
<dbReference type="InterPro" id="IPR036766">
    <property type="entry name" value="Fe_traffick_prot_YggX_sf"/>
</dbReference>
<dbReference type="NCBIfam" id="NF003817">
    <property type="entry name" value="PRK05408.1"/>
    <property type="match status" value="1"/>
</dbReference>
<dbReference type="PANTHER" id="PTHR36965">
    <property type="entry name" value="FE(2+)-TRAFFICKING PROTEIN-RELATED"/>
    <property type="match status" value="1"/>
</dbReference>
<dbReference type="PANTHER" id="PTHR36965:SF1">
    <property type="entry name" value="FE(2+)-TRAFFICKING PROTEIN-RELATED"/>
    <property type="match status" value="1"/>
</dbReference>
<dbReference type="Pfam" id="PF04362">
    <property type="entry name" value="Iron_traffic"/>
    <property type="match status" value="1"/>
</dbReference>
<dbReference type="PIRSF" id="PIRSF029827">
    <property type="entry name" value="Fe_traffic_YggX"/>
    <property type="match status" value="1"/>
</dbReference>
<dbReference type="SUPFAM" id="SSF111148">
    <property type="entry name" value="YggX-like"/>
    <property type="match status" value="1"/>
</dbReference>
<organism>
    <name type="scientific">Escherichia coli (strain ATCC 8739 / DSM 1576 / NBRC 3972 / NCIMB 8545 / WDCM 00012 / Crooks)</name>
    <dbReference type="NCBI Taxonomy" id="481805"/>
    <lineage>
        <taxon>Bacteria</taxon>
        <taxon>Pseudomonadati</taxon>
        <taxon>Pseudomonadota</taxon>
        <taxon>Gammaproteobacteria</taxon>
        <taxon>Enterobacterales</taxon>
        <taxon>Enterobacteriaceae</taxon>
        <taxon>Escherichia</taxon>
    </lineage>
</organism>
<proteinExistence type="inferred from homology"/>
<accession>B1ISK7</accession>
<keyword id="KW-0408">Iron</keyword>